<feature type="chain" id="PRO_0000354356" description="Small ribosomal subunit protein uS19c">
    <location>
        <begin position="1"/>
        <end position="92"/>
    </location>
</feature>
<proteinExistence type="inferred from homology"/>
<evidence type="ECO:0000255" key="1">
    <source>
        <dbReference type="HAMAP-Rule" id="MF_00531"/>
    </source>
</evidence>
<evidence type="ECO:0000305" key="2"/>
<gene>
    <name evidence="1" type="primary">rps19</name>
</gene>
<organism>
    <name type="scientific">Illicium oligandrum</name>
    <name type="common">Star anise</name>
    <dbReference type="NCBI Taxonomy" id="145286"/>
    <lineage>
        <taxon>Eukaryota</taxon>
        <taxon>Viridiplantae</taxon>
        <taxon>Streptophyta</taxon>
        <taxon>Embryophyta</taxon>
        <taxon>Tracheophyta</taxon>
        <taxon>Spermatophyta</taxon>
        <taxon>Magnoliopsida</taxon>
        <taxon>Austrobaileyales</taxon>
        <taxon>Schisandraceae</taxon>
        <taxon>Illicium</taxon>
    </lineage>
</organism>
<geneLocation type="chloroplast"/>
<dbReference type="EMBL" id="EF380354">
    <property type="protein sequence ID" value="ABQ52559.1"/>
    <property type="molecule type" value="Genomic_DNA"/>
</dbReference>
<dbReference type="RefSeq" id="YP_001294311.1">
    <property type="nucleotide sequence ID" value="NC_009600.1"/>
</dbReference>
<dbReference type="SMR" id="A6MMY5"/>
<dbReference type="GeneID" id="5236748"/>
<dbReference type="GO" id="GO:0009507">
    <property type="term" value="C:chloroplast"/>
    <property type="evidence" value="ECO:0007669"/>
    <property type="project" value="UniProtKB-SubCell"/>
</dbReference>
<dbReference type="GO" id="GO:0005763">
    <property type="term" value="C:mitochondrial small ribosomal subunit"/>
    <property type="evidence" value="ECO:0007669"/>
    <property type="project" value="TreeGrafter"/>
</dbReference>
<dbReference type="GO" id="GO:0019843">
    <property type="term" value="F:rRNA binding"/>
    <property type="evidence" value="ECO:0007669"/>
    <property type="project" value="UniProtKB-UniRule"/>
</dbReference>
<dbReference type="GO" id="GO:0003735">
    <property type="term" value="F:structural constituent of ribosome"/>
    <property type="evidence" value="ECO:0007669"/>
    <property type="project" value="InterPro"/>
</dbReference>
<dbReference type="GO" id="GO:0000028">
    <property type="term" value="P:ribosomal small subunit assembly"/>
    <property type="evidence" value="ECO:0007669"/>
    <property type="project" value="TreeGrafter"/>
</dbReference>
<dbReference type="GO" id="GO:0006412">
    <property type="term" value="P:translation"/>
    <property type="evidence" value="ECO:0007669"/>
    <property type="project" value="UniProtKB-UniRule"/>
</dbReference>
<dbReference type="FunFam" id="3.30.860.10:FF:000001">
    <property type="entry name" value="30S ribosomal protein S19"/>
    <property type="match status" value="1"/>
</dbReference>
<dbReference type="Gene3D" id="3.30.860.10">
    <property type="entry name" value="30s Ribosomal Protein S19, Chain A"/>
    <property type="match status" value="1"/>
</dbReference>
<dbReference type="HAMAP" id="MF_00531">
    <property type="entry name" value="Ribosomal_uS19"/>
    <property type="match status" value="1"/>
</dbReference>
<dbReference type="InterPro" id="IPR002222">
    <property type="entry name" value="Ribosomal_uS19"/>
</dbReference>
<dbReference type="InterPro" id="IPR005732">
    <property type="entry name" value="Ribosomal_uS19_bac-type"/>
</dbReference>
<dbReference type="InterPro" id="IPR020934">
    <property type="entry name" value="Ribosomal_uS19_CS"/>
</dbReference>
<dbReference type="InterPro" id="IPR023575">
    <property type="entry name" value="Ribosomal_uS19_SF"/>
</dbReference>
<dbReference type="NCBIfam" id="TIGR01050">
    <property type="entry name" value="rpsS_bact"/>
    <property type="match status" value="1"/>
</dbReference>
<dbReference type="PANTHER" id="PTHR11880">
    <property type="entry name" value="RIBOSOMAL PROTEIN S19P FAMILY MEMBER"/>
    <property type="match status" value="1"/>
</dbReference>
<dbReference type="PANTHER" id="PTHR11880:SF8">
    <property type="entry name" value="SMALL RIBOSOMAL SUBUNIT PROTEIN US19M"/>
    <property type="match status" value="1"/>
</dbReference>
<dbReference type="Pfam" id="PF00203">
    <property type="entry name" value="Ribosomal_S19"/>
    <property type="match status" value="1"/>
</dbReference>
<dbReference type="PIRSF" id="PIRSF002144">
    <property type="entry name" value="Ribosomal_S19"/>
    <property type="match status" value="1"/>
</dbReference>
<dbReference type="PRINTS" id="PR00975">
    <property type="entry name" value="RIBOSOMALS19"/>
</dbReference>
<dbReference type="SUPFAM" id="SSF54570">
    <property type="entry name" value="Ribosomal protein S19"/>
    <property type="match status" value="1"/>
</dbReference>
<dbReference type="PROSITE" id="PS00323">
    <property type="entry name" value="RIBOSOMAL_S19"/>
    <property type="match status" value="1"/>
</dbReference>
<reference key="1">
    <citation type="journal article" date="2007" name="Mol. Phylogenet. Evol.">
        <title>Phylogenetic and evolutionary implications of complete chloroplast genome sequences of four early-diverging angiosperms: Buxus (Buxaceae), Chloranthus (Chloranthaceae), Dioscorea (Dioscoreaceae), and Illicium (Schisandraceae).</title>
        <authorList>
            <person name="Hansen D.R."/>
            <person name="Dastidar S.G."/>
            <person name="Cai Z."/>
            <person name="Penaflor C."/>
            <person name="Kuehl J.V."/>
            <person name="Boore J.L."/>
            <person name="Jansen R.K."/>
        </authorList>
    </citation>
    <scope>NUCLEOTIDE SEQUENCE [LARGE SCALE GENOMIC DNA]</scope>
</reference>
<keyword id="KW-0150">Chloroplast</keyword>
<keyword id="KW-0934">Plastid</keyword>
<keyword id="KW-0687">Ribonucleoprotein</keyword>
<keyword id="KW-0689">Ribosomal protein</keyword>
<keyword id="KW-0694">RNA-binding</keyword>
<keyword id="KW-0699">rRNA-binding</keyword>
<name>RR19_ILLOL</name>
<sequence length="92" mass="10583">MARSLKKNPFVANHLLGKIEKLNMREEKEIIVTWSRASTIIPTMIGHTIAIHNGKEHLPIYITDRMVGHKLGEFAPTLTFRGHARNDNRSRR</sequence>
<accession>A6MMY5</accession>
<protein>
    <recommendedName>
        <fullName evidence="1">Small ribosomal subunit protein uS19c</fullName>
    </recommendedName>
    <alternativeName>
        <fullName evidence="2">30S ribosomal protein S19, chloroplastic</fullName>
    </alternativeName>
</protein>
<comment type="function">
    <text evidence="1">Protein S19 forms a complex with S13 that binds strongly to the 16S ribosomal RNA.</text>
</comment>
<comment type="subcellular location">
    <subcellularLocation>
        <location>Plastid</location>
        <location>Chloroplast</location>
    </subcellularLocation>
</comment>
<comment type="similarity">
    <text evidence="1">Belongs to the universal ribosomal protein uS19 family.</text>
</comment>